<sequence>MNTPAQLSLPLYLPDDETFASFWPGDNSSLLAALQNVLRQEHSGYIYLWAREGAGRSHLLHAACAELSQRGDAVGYVPLDKRTWFVPEVLDGMEHLSLVCIDNIECIAGDELWEMAIFDLYNRILESGKTRLLITGDRPPRQLNLGLPDLASRLDWGQIYKLQPLSDEDKLQALQLRARLRGFELPEDVGRFLLKRLDREMRTLFMTLDQLDRASITAQRKLTIPFVKEILKL</sequence>
<comment type="function">
    <text evidence="1">Mediates the interaction of DNA replication initiator protein DnaA with DNA polymerase subunit beta sliding clamp (dnaN). Stimulates hydrolysis of ATP-DnaA to ADP-DnaA, rendering DnaA inactive for reinitiation, a process called regulatory inhibition of DnaA or RIDA (By similarity).</text>
</comment>
<comment type="subunit">
    <text evidence="2">The active form seems to be an ADP-bound monomer. Forms the RIDA complex (regulatory inactivation of DnaA) of ATP-DnaA, ADP-Hda and the DNA-loaded beta sliding clamp (dnaN).</text>
</comment>
<comment type="similarity">
    <text evidence="2">Belongs to the DnaA family. HdA subfamily.</text>
</comment>
<comment type="sequence caution" evidence="3">
    <conflict type="erroneous initiation">
        <sequence resource="EMBL-CDS" id="CAR18760"/>
    </conflict>
</comment>
<protein>
    <recommendedName>
        <fullName evidence="2">DnaA regulatory inactivator Hda</fullName>
    </recommendedName>
</protein>
<name>HDA_ECO7I</name>
<evidence type="ECO:0000250" key="1"/>
<evidence type="ECO:0000255" key="2">
    <source>
        <dbReference type="HAMAP-Rule" id="MF_01158"/>
    </source>
</evidence>
<evidence type="ECO:0000305" key="3"/>
<proteinExistence type="inferred from homology"/>
<feature type="chain" id="PRO_1000137809" description="DnaA regulatory inactivator Hda">
    <location>
        <begin position="1"/>
        <end position="233"/>
    </location>
</feature>
<accession>B7NQN5</accession>
<organism>
    <name type="scientific">Escherichia coli O7:K1 (strain IAI39 / ExPEC)</name>
    <dbReference type="NCBI Taxonomy" id="585057"/>
    <lineage>
        <taxon>Bacteria</taxon>
        <taxon>Pseudomonadati</taxon>
        <taxon>Pseudomonadota</taxon>
        <taxon>Gammaproteobacteria</taxon>
        <taxon>Enterobacterales</taxon>
        <taxon>Enterobacteriaceae</taxon>
        <taxon>Escherichia</taxon>
    </lineage>
</organism>
<reference key="1">
    <citation type="journal article" date="2009" name="PLoS Genet.">
        <title>Organised genome dynamics in the Escherichia coli species results in highly diverse adaptive paths.</title>
        <authorList>
            <person name="Touchon M."/>
            <person name="Hoede C."/>
            <person name="Tenaillon O."/>
            <person name="Barbe V."/>
            <person name="Baeriswyl S."/>
            <person name="Bidet P."/>
            <person name="Bingen E."/>
            <person name="Bonacorsi S."/>
            <person name="Bouchier C."/>
            <person name="Bouvet O."/>
            <person name="Calteau A."/>
            <person name="Chiapello H."/>
            <person name="Clermont O."/>
            <person name="Cruveiller S."/>
            <person name="Danchin A."/>
            <person name="Diard M."/>
            <person name="Dossat C."/>
            <person name="Karoui M.E."/>
            <person name="Frapy E."/>
            <person name="Garry L."/>
            <person name="Ghigo J.M."/>
            <person name="Gilles A.M."/>
            <person name="Johnson J."/>
            <person name="Le Bouguenec C."/>
            <person name="Lescat M."/>
            <person name="Mangenot S."/>
            <person name="Martinez-Jehanne V."/>
            <person name="Matic I."/>
            <person name="Nassif X."/>
            <person name="Oztas S."/>
            <person name="Petit M.A."/>
            <person name="Pichon C."/>
            <person name="Rouy Z."/>
            <person name="Ruf C.S."/>
            <person name="Schneider D."/>
            <person name="Tourret J."/>
            <person name="Vacherie B."/>
            <person name="Vallenet D."/>
            <person name="Medigue C."/>
            <person name="Rocha E.P.C."/>
            <person name="Denamur E."/>
        </authorList>
    </citation>
    <scope>NUCLEOTIDE SEQUENCE [LARGE SCALE GENOMIC DNA]</scope>
    <source>
        <strain>IAI39 / ExPEC</strain>
    </source>
</reference>
<gene>
    <name evidence="2" type="primary">hda</name>
    <name type="ordered locus">ECIAI39_2637</name>
</gene>
<keyword id="KW-0235">DNA replication</keyword>
<keyword id="KW-0236">DNA replication inhibitor</keyword>
<dbReference type="EMBL" id="CU928164">
    <property type="protein sequence ID" value="CAR18760.1"/>
    <property type="status" value="ALT_INIT"/>
    <property type="molecule type" value="Genomic_DNA"/>
</dbReference>
<dbReference type="RefSeq" id="WP_001307333.1">
    <property type="nucleotide sequence ID" value="NC_011750.1"/>
</dbReference>
<dbReference type="RefSeq" id="YP_002408582.1">
    <property type="nucleotide sequence ID" value="NC_011750.1"/>
</dbReference>
<dbReference type="SMR" id="B7NQN5"/>
<dbReference type="STRING" id="585057.ECIAI39_2637"/>
<dbReference type="KEGG" id="ect:ECIAI39_2637"/>
<dbReference type="PATRIC" id="fig|585057.6.peg.2742"/>
<dbReference type="HOGENOM" id="CLU_072265_1_1_6"/>
<dbReference type="Proteomes" id="UP000000749">
    <property type="component" value="Chromosome"/>
</dbReference>
<dbReference type="GO" id="GO:0006270">
    <property type="term" value="P:DNA replication initiation"/>
    <property type="evidence" value="ECO:0007669"/>
    <property type="project" value="TreeGrafter"/>
</dbReference>
<dbReference type="GO" id="GO:0032297">
    <property type="term" value="P:negative regulation of DNA-templated DNA replication initiation"/>
    <property type="evidence" value="ECO:0007669"/>
    <property type="project" value="InterPro"/>
</dbReference>
<dbReference type="FunFam" id="1.10.8.60:FF:000024">
    <property type="entry name" value="DnaA regulatory inactivator Hda"/>
    <property type="match status" value="1"/>
</dbReference>
<dbReference type="FunFam" id="3.40.50.300:FF:000452">
    <property type="entry name" value="DnaA regulatory inactivator Hda"/>
    <property type="match status" value="1"/>
</dbReference>
<dbReference type="Gene3D" id="1.10.8.60">
    <property type="match status" value="1"/>
</dbReference>
<dbReference type="Gene3D" id="3.40.50.300">
    <property type="entry name" value="P-loop containing nucleotide triphosphate hydrolases"/>
    <property type="match status" value="1"/>
</dbReference>
<dbReference type="HAMAP" id="MF_01158">
    <property type="entry name" value="Hda"/>
    <property type="match status" value="1"/>
</dbReference>
<dbReference type="InterPro" id="IPR020591">
    <property type="entry name" value="Chromosome_initiator_DnaA-like"/>
</dbReference>
<dbReference type="InterPro" id="IPR013317">
    <property type="entry name" value="DnaA_dom"/>
</dbReference>
<dbReference type="InterPro" id="IPR017788">
    <property type="entry name" value="Hda"/>
</dbReference>
<dbReference type="InterPro" id="IPR022864">
    <property type="entry name" value="Hda_Enterobact"/>
</dbReference>
<dbReference type="InterPro" id="IPR055199">
    <property type="entry name" value="Hda_lid"/>
</dbReference>
<dbReference type="InterPro" id="IPR027417">
    <property type="entry name" value="P-loop_NTPase"/>
</dbReference>
<dbReference type="NCBIfam" id="TIGR03420">
    <property type="entry name" value="DnaA_homol_Hda"/>
    <property type="match status" value="1"/>
</dbReference>
<dbReference type="NCBIfam" id="NF005982">
    <property type="entry name" value="PRK08084.1"/>
    <property type="match status" value="1"/>
</dbReference>
<dbReference type="PANTHER" id="PTHR30050">
    <property type="entry name" value="CHROMOSOMAL REPLICATION INITIATOR PROTEIN DNAA"/>
    <property type="match status" value="1"/>
</dbReference>
<dbReference type="PANTHER" id="PTHR30050:SF5">
    <property type="entry name" value="DNAA REGULATORY INACTIVATOR HDA"/>
    <property type="match status" value="1"/>
</dbReference>
<dbReference type="Pfam" id="PF00308">
    <property type="entry name" value="Bac_DnaA"/>
    <property type="match status" value="1"/>
</dbReference>
<dbReference type="Pfam" id="PF22688">
    <property type="entry name" value="Hda_lid"/>
    <property type="match status" value="1"/>
</dbReference>
<dbReference type="PRINTS" id="PR00051">
    <property type="entry name" value="DNAA"/>
</dbReference>
<dbReference type="SUPFAM" id="SSF52540">
    <property type="entry name" value="P-loop containing nucleoside triphosphate hydrolases"/>
    <property type="match status" value="1"/>
</dbReference>